<reference key="1">
    <citation type="journal article" date="2006" name="Mol. Biol. Evol.">
        <title>The complete chloroplast genome sequence of Pelargonium x hortorum: organization and evolution of the largest and most highly rearranged chloroplast genome of land plants.</title>
        <authorList>
            <person name="Chumley T.W."/>
            <person name="Palmer J.D."/>
            <person name="Mower J.P."/>
            <person name="Fourcade H.M."/>
            <person name="Calie P.J."/>
            <person name="Boore J.L."/>
            <person name="Jansen R.K."/>
        </authorList>
    </citation>
    <scope>NUCLEOTIDE SEQUENCE [LARGE SCALE GENOMIC DNA]</scope>
    <source>
        <strain>cv. Ringo White</strain>
    </source>
</reference>
<feature type="chain" id="PRO_0000358018" description="NAD(P)H-quinone oxidoreductase subunit H, chloroplastic">
    <location>
        <begin position="1"/>
        <end position="393"/>
    </location>
</feature>
<organism>
    <name type="scientific">Pelargonium hortorum</name>
    <name type="common">Common geranium</name>
    <name type="synonym">Pelargonium inquinans x Pelargonium zonale</name>
    <dbReference type="NCBI Taxonomy" id="4031"/>
    <lineage>
        <taxon>Eukaryota</taxon>
        <taxon>Viridiplantae</taxon>
        <taxon>Streptophyta</taxon>
        <taxon>Embryophyta</taxon>
        <taxon>Tracheophyta</taxon>
        <taxon>Spermatophyta</taxon>
        <taxon>Magnoliopsida</taxon>
        <taxon>eudicotyledons</taxon>
        <taxon>Gunneridae</taxon>
        <taxon>Pentapetalae</taxon>
        <taxon>rosids</taxon>
        <taxon>malvids</taxon>
        <taxon>Geraniales</taxon>
        <taxon>Geraniaceae</taxon>
        <taxon>Pelargonium</taxon>
    </lineage>
</organism>
<name>NDHH_PELHO</name>
<gene>
    <name evidence="1" type="primary">ndhH</name>
</gene>
<accession>Q06FP8</accession>
<keyword id="KW-0150">Chloroplast</keyword>
<keyword id="KW-0472">Membrane</keyword>
<keyword id="KW-0520">NAD</keyword>
<keyword id="KW-0521">NADP</keyword>
<keyword id="KW-0934">Plastid</keyword>
<keyword id="KW-0618">Plastoquinone</keyword>
<keyword id="KW-0874">Quinone</keyword>
<keyword id="KW-0793">Thylakoid</keyword>
<keyword id="KW-1278">Translocase</keyword>
<keyword id="KW-0813">Transport</keyword>
<dbReference type="EC" id="7.1.1.-" evidence="1"/>
<dbReference type="EMBL" id="DQ897681">
    <property type="protein sequence ID" value="ABI17315.1"/>
    <property type="molecule type" value="Genomic_DNA"/>
</dbReference>
<dbReference type="EMBL" id="DQ897681">
    <property type="protein sequence ID" value="ABI17324.1"/>
    <property type="molecule type" value="Genomic_DNA"/>
</dbReference>
<dbReference type="RefSeq" id="YP_784124.1">
    <property type="nucleotide sequence ID" value="NC_008454.1"/>
</dbReference>
<dbReference type="RefSeq" id="YP_784133.1">
    <property type="nucleotide sequence ID" value="NC_008454.1"/>
</dbReference>
<dbReference type="SMR" id="Q06FP8"/>
<dbReference type="GeneID" id="4362798"/>
<dbReference type="GeneID" id="4362886"/>
<dbReference type="GO" id="GO:0009535">
    <property type="term" value="C:chloroplast thylakoid membrane"/>
    <property type="evidence" value="ECO:0007669"/>
    <property type="project" value="UniProtKB-SubCell"/>
</dbReference>
<dbReference type="GO" id="GO:0051287">
    <property type="term" value="F:NAD binding"/>
    <property type="evidence" value="ECO:0007669"/>
    <property type="project" value="InterPro"/>
</dbReference>
<dbReference type="GO" id="GO:0016655">
    <property type="term" value="F:oxidoreductase activity, acting on NAD(P)H, quinone or similar compound as acceptor"/>
    <property type="evidence" value="ECO:0007669"/>
    <property type="project" value="UniProtKB-UniRule"/>
</dbReference>
<dbReference type="GO" id="GO:0048038">
    <property type="term" value="F:quinone binding"/>
    <property type="evidence" value="ECO:0007669"/>
    <property type="project" value="UniProtKB-KW"/>
</dbReference>
<dbReference type="GO" id="GO:0019684">
    <property type="term" value="P:photosynthesis, light reaction"/>
    <property type="evidence" value="ECO:0007669"/>
    <property type="project" value="UniProtKB-UniRule"/>
</dbReference>
<dbReference type="Gene3D" id="1.10.645.10">
    <property type="entry name" value="Cytochrome-c3 Hydrogenase, chain B"/>
    <property type="match status" value="1"/>
</dbReference>
<dbReference type="HAMAP" id="MF_01358">
    <property type="entry name" value="NDH1_NuoD"/>
    <property type="match status" value="1"/>
</dbReference>
<dbReference type="InterPro" id="IPR001135">
    <property type="entry name" value="NADH_Q_OxRdtase_suD"/>
</dbReference>
<dbReference type="InterPro" id="IPR014029">
    <property type="entry name" value="NADH_UbQ_OxRdtase_49kDa_CS"/>
</dbReference>
<dbReference type="InterPro" id="IPR022885">
    <property type="entry name" value="NDH1_su_D/H"/>
</dbReference>
<dbReference type="InterPro" id="IPR029014">
    <property type="entry name" value="NiFe-Hase_large"/>
</dbReference>
<dbReference type="NCBIfam" id="NF004739">
    <property type="entry name" value="PRK06075.1"/>
    <property type="match status" value="1"/>
</dbReference>
<dbReference type="NCBIfam" id="NF005649">
    <property type="entry name" value="PRK07415.1"/>
    <property type="match status" value="1"/>
</dbReference>
<dbReference type="PANTHER" id="PTHR11993:SF10">
    <property type="entry name" value="NADH DEHYDROGENASE [UBIQUINONE] IRON-SULFUR PROTEIN 2, MITOCHONDRIAL"/>
    <property type="match status" value="1"/>
</dbReference>
<dbReference type="PANTHER" id="PTHR11993">
    <property type="entry name" value="NADH-UBIQUINONE OXIDOREDUCTASE 49 KDA SUBUNIT"/>
    <property type="match status" value="1"/>
</dbReference>
<dbReference type="Pfam" id="PF00346">
    <property type="entry name" value="Complex1_49kDa"/>
    <property type="match status" value="1"/>
</dbReference>
<dbReference type="SUPFAM" id="SSF56762">
    <property type="entry name" value="HydB/Nqo4-like"/>
    <property type="match status" value="1"/>
</dbReference>
<dbReference type="PROSITE" id="PS00535">
    <property type="entry name" value="COMPLEX1_49K"/>
    <property type="match status" value="1"/>
</dbReference>
<evidence type="ECO:0000255" key="1">
    <source>
        <dbReference type="HAMAP-Rule" id="MF_01358"/>
    </source>
</evidence>
<sequence>MTIPATRKDLMIVNMGPHHPSMHGVLRLILTLDGEDVIDCEPVLGYLHRGMEKIAENRTIIQYLPYVTRWDYLATMFTEVITVNAPEQLGNIQVPKRAGYIRTIMLELSRIASHLLWLGPFMADIGAQTPFFYIFRERELIYDLFEAATGMRMMHNYFRIGGVAADLPHGWIDKCLDFCNYFLTGLAEYEKLITRNPIFLERVEGIGIIGKEEAISWGLSGPMLRASGMQWDLRKIDNSECYKKFDWEVQWQKEGDSLARYLVRIGEMRESIKMIQQALEGIPGGPYENLEIRCFDRERYPEWGGFEYRFISKKPSPTFELPKQELYVRVEAPKGELGVFLIGDRSSFPWRWKIRPPGFMNLQILPQLVKRMKLADIMTILGSIDIIMGEVDR</sequence>
<proteinExistence type="inferred from homology"/>
<comment type="function">
    <text evidence="1">NDH shuttles electrons from NAD(P)H:plastoquinone, via FMN and iron-sulfur (Fe-S) centers, to quinones in the photosynthetic chain and possibly in a chloroplast respiratory chain. The immediate electron acceptor for the enzyme in this species is believed to be plastoquinone. Couples the redox reaction to proton translocation, and thus conserves the redox energy in a proton gradient.</text>
</comment>
<comment type="catalytic activity">
    <reaction evidence="1">
        <text>a plastoquinone + NADH + (n+1) H(+)(in) = a plastoquinol + NAD(+) + n H(+)(out)</text>
        <dbReference type="Rhea" id="RHEA:42608"/>
        <dbReference type="Rhea" id="RHEA-COMP:9561"/>
        <dbReference type="Rhea" id="RHEA-COMP:9562"/>
        <dbReference type="ChEBI" id="CHEBI:15378"/>
        <dbReference type="ChEBI" id="CHEBI:17757"/>
        <dbReference type="ChEBI" id="CHEBI:57540"/>
        <dbReference type="ChEBI" id="CHEBI:57945"/>
        <dbReference type="ChEBI" id="CHEBI:62192"/>
    </reaction>
</comment>
<comment type="catalytic activity">
    <reaction evidence="1">
        <text>a plastoquinone + NADPH + (n+1) H(+)(in) = a plastoquinol + NADP(+) + n H(+)(out)</text>
        <dbReference type="Rhea" id="RHEA:42612"/>
        <dbReference type="Rhea" id="RHEA-COMP:9561"/>
        <dbReference type="Rhea" id="RHEA-COMP:9562"/>
        <dbReference type="ChEBI" id="CHEBI:15378"/>
        <dbReference type="ChEBI" id="CHEBI:17757"/>
        <dbReference type="ChEBI" id="CHEBI:57783"/>
        <dbReference type="ChEBI" id="CHEBI:58349"/>
        <dbReference type="ChEBI" id="CHEBI:62192"/>
    </reaction>
</comment>
<comment type="subunit">
    <text evidence="1">NDH is composed of at least 16 different subunits, 5 of which are encoded in the nucleus.</text>
</comment>
<comment type="subcellular location">
    <subcellularLocation>
        <location evidence="1">Plastid</location>
        <location evidence="1">Chloroplast thylakoid membrane</location>
        <topology evidence="1">Peripheral membrane protein</topology>
        <orientation evidence="1">Stromal side</orientation>
    </subcellularLocation>
</comment>
<comment type="similarity">
    <text evidence="1">Belongs to the complex I 49 kDa subunit family.</text>
</comment>
<geneLocation type="chloroplast"/>
<protein>
    <recommendedName>
        <fullName evidence="1">NAD(P)H-quinone oxidoreductase subunit H, chloroplastic</fullName>
        <ecNumber evidence="1">7.1.1.-</ecNumber>
    </recommendedName>
    <alternativeName>
        <fullName>NAD(P)H dehydrogenase subunit H</fullName>
    </alternativeName>
    <alternativeName>
        <fullName evidence="1">NADH-plastoquinone oxidoreductase 49 kDa subunit</fullName>
    </alternativeName>
    <alternativeName>
        <fullName evidence="1">NADH-plastoquinone oxidoreductase subunit H</fullName>
    </alternativeName>
</protein>